<name>DYH5_RAT</name>
<sequence length="3470" mass="395933">MFRIGRRQLWKQSVTRVLTQRLKEEKEAKRARLDGRHDYLFAIVASCLDLNKPEVEDALLEGNQIERIDQLFAVGGLRHLMFYYQDVEGAEAGQFGSSGGVNPASGKMKKPKVFVTEGKDVALMGACVFFTRADPSKAITAENIHREVSFNTLDTADGGLLNSVRRLLSDIFIPALRASSHGWGELEGLQDASSIQQEFLSSLEGFVGILSGAQNSLKEKVNLQKCDIVELKSLKEPMDYLALASNPETVEKVECCMRVWIKQMEQILAENNQLRKEADDVGPRAELEHWKKRLSKFNYLLDQLKSPDVKAVLAMLAAAKSKLLKVWRDADIRVTDAANEAKDNVKYLYTLEKCCDPLYSSDPVTMVDAIPTLINAIKMIYSISHYYNTSERITSLFVKVTNQMISACKAHITNNGTATIWSQPQDIVMQKIAAAIKLKQGYQCCFQETKQKLKQNPSEKQFDFSEMYIFGKFETFHQRLAKIMDIFTTFKTYSVLQDSKIEGLEDMVTKYQDVVAGIKKKEYNFLDQRKMDFDQDYDEFCKQTNELHSELQRFMDTTFEKIQSTRQALSTLKKFERLNIPNLGIEAKYQIVFQNFGTDIDMISKLYTKQKYDPPLARDQPPIAGKILWARQLFHRLEQPMQLFQQHPFVLRTVEAKPVIRSYNRIAKVLLEFEVLYHRAWLQQIEEIHVGLEASLLVKAPGTGQLFVNFDPQILILFRETQCMSQMGLPVSPFAAALFEKRDMYKKNFSDMKMMLSEYQRVKLKMPPAIEQLMLPHLARVDEALQPGLAVLTWTSLNIGTYLENAFEKIKDLELLLDRINDLIEFRIHAILEEMSSVALCQLPQDDPLTCEEFLQMTKDLCVNGAQKLHFKSSLVEEAVNELINMLLDVDVLPEEASEKVRHENASPNGDTSGGGEGCAEALASSFNAGTSSLPLTTIARKKKEMEVLEEARELLSYFNHQNTDALLKVTRNTLEAIRRRIHFSHMINFRDSKGASKVKQNHLPIFRASVTLAIPNISMTPALEDIQQTLNKAVECIISVPKGVRQWSSELLSKRKMRERKMAAVQSNEDSDSDTEVEESELQETLELASVNLPIPVQTQNYYKNISDNKEIVKLVSVLSTVISSTKKEVITSMDRFKCYNHIWQKEKEDTIMTFIAQNPLLSEFESRILYFQSLEQEINAEPEYICVGSIALYTADLKFSLTAETKAWMMVLGRHCNRKYRSEMENIFTVVEEFQKKLNRPIKDLDDIRIAMAALKEIREQQISTDFQVGPIEESYALLNKYGLLVAKEEMDKVDTLRYAWEKLLARASDVQNELGALQPSFRKELISTVEVFLQDCQQFYLDYDLNGPMVSGLKPQEASDRLIIFQNQFDNIYRKYITYTGGEELFGLPVTQYPQLLEIKKQLNLLQKIYSLYNNVIETVNSYQDTLWSEVNIEKINSELLEFQNRCRKLPRALKDWQAFLDMKKTIDDFSECCPLLEYMASNAMVERHWQRITTLTGHSLDVGNETFKLRNIMEVPLLKYKEEIEDICISAVKERDIEQKLKQVINEWDNKTLTFSSFKTRGELLLRGDSTSEVIASMEDSLMLLGSLLSNRYNMPFKAQIQNWVQCLSNSTDIIENWMTVQNLWIYLEAVFVGGDIAKQLPKEAKRFSNIDKSWVKIMTRAHEIPNVVQCCVGDETMGQLLPHLLDQLEICQKSLTGYLEKKRLCFPRFFFVSDPALLEILGQASDSHTIQAHLLNVFDNIKTVKFHDKIYDRILSISSREGETIELDKPVMAEGNVEVWLNSLLEESQSSLHLVIRQAAANIQESGFQLIEFLSSFPAQVGLLGIQMLWTRDSEEALQNAKFDKKIMQKTNQSFLELLNMLIEMTTKDLSSMERVKYETLITIHVHQRDIFDDLCHMHVKSPTDFEWLKQCRFYFKEDSDKTMIHITDVAFTYQNEFLGCTDRLVITPLTDRCYITLAQALGMSMGGAPAGPAGTGKTETTKDMGRCLGKYVVVFNCSDQMDFRGLGRIFKGLAQSGSWGCFDEFNRIDLPVLSVAAQQISIILTCKKEHKKSFIFTDGDNVTMNPEFGLFLTMNPGYAGRQELPENLKINFRSVAMMVPDRQIIIRVKLASCGFIDNVVLARKFFTLYQLCEEQLSKQVHYDFGLRNILSVLRTLGAAKRASHTDTESTIVMRVLRDMNLSKLIDEDEPLFLSLIEDLFPNILLDKAGYPELETAISKQVEEAGLINHPPWKLKVIQLFETQRVRHGMMTLGPSGSGKTSCIHTLMKAMTDCGKPHREMRMNPKAITAPQMFGRLDVATNDWTDGIFSTLWRKTLKAKKGEHIWIVLDGPVDAIWIENLNSVLDDNKTLTLANGDRIPMAPNCKIVFEPHNIDNASPATVSRNGMVFMSSSVLDWSPILEGFLKRRSPQEAEILRQLYAETFPDLYRFSIQNLEFKMEILEAFVITQSTHMLQGLIPTKEQAGDVDPEHLGRLFVFAMMWSVGAVLELEGRRRMELWLRSREGPTLHLPQLTDPGDTMFDYYVAPDGTWRHWSMCIPEYVYPPDTTPEYGSILVPNVDNVRTDFLIKTIAKQGKAVLLIGEQGTAKTVIIKGFMSKFDPESHTVKNLNFSSATTPLMFQRTIESYVDKRMGTTYGPPAGKKMAVFIDDLNMPVINEWGDQVTNEIVRQLMEQNGFYNLEKPGEFTSIVDIQFLAAMIHPGGGRNDIPQRLKRQFSIFNCTLPSDASMDKIFGVIGEGYYCAQRGFSKEVQDAVIKLVPLTRRLWQMTKLKMLPTPAKFHYVFNLRDLSRIWQGMLNITSEVIKDTDELLRLWKHECKRVIADRFSMSSDVTWFDKAVVSLVEEEFGEEKTPVVDCGVDAYFVDFLRDAPEATGETPEETDAEMPKLYEPIASLNHLQERLSVFLQLYNESIRGTGMDMVFFRDAMVHLVKISRVIRTPRGNALLVGVGGSGKQSLTRLASFIAGYTSFQITLTRSYNTSNLMEDLKVLYRTAGQQGKGITFIFTDNEIKEESFLEYMNNVLSSGEVSNLFARDEIDEINSDLTSIMKKEHPKRPPTNDNLYEYFMSRVRGNLHIVLCFSPVGEKFRNRALKFPALISGCTIDWFSRWPKDALVAVSEHFLSSYNIDCTAEIKKELVQCMGSFQDGVAEKCADYFQRFRRSTHVTPKSYLSFIQGYKFIYEEKHVEVQSLANRMNTGLEKLKEASESVAALSQELAVKEKELQVANEKADMVLKEVTMKAQAAEKVKAEVQKVKDKAQAIVDSISKDKAIAEEKLEAAKPALEEAEAALQTIKPSDIATVRTLGRPPHLIMRIMDCVLLLFHRRVNAVKIDLDKSCTVPSWQESLKLMTAGNFLQNLQQFPKDTINEEVIEFLSPYFEMSDYNIETAKRVCGNVAGLCSWTKAMASFFSINKEVLPLKANLIVQENRHALAMQDLQKAQAELDDKQAELDVVQAEYEQAMTEKQ</sequence>
<gene>
    <name evidence="7" type="primary">Dnah5</name>
</gene>
<dbReference type="EMBL" id="AABR07008948">
    <property type="status" value="NOT_ANNOTATED_CDS"/>
    <property type="molecule type" value="Genomic_DNA"/>
</dbReference>
<dbReference type="SMR" id="M0R8U1"/>
<dbReference type="FunCoup" id="M0R8U1">
    <property type="interactions" value="50"/>
</dbReference>
<dbReference type="IntAct" id="M0R8U1">
    <property type="interactions" value="1"/>
</dbReference>
<dbReference type="MINT" id="M0R8U1"/>
<dbReference type="STRING" id="10116.ENSRNOP00000065896"/>
<dbReference type="PhosphoSitePlus" id="M0R8U1"/>
<dbReference type="PaxDb" id="10116-ENSRNOP00000065896"/>
<dbReference type="AGR" id="RGD:1560828"/>
<dbReference type="RGD" id="1560828">
    <property type="gene designation" value="Dnah5"/>
</dbReference>
<dbReference type="VEuPathDB" id="HostDB:ENSRNOG00000048363"/>
<dbReference type="eggNOG" id="KOG3595">
    <property type="taxonomic scope" value="Eukaryota"/>
</dbReference>
<dbReference type="HOGENOM" id="CLU_000038_9_1_1"/>
<dbReference type="InParanoid" id="M0R8U1"/>
<dbReference type="Proteomes" id="UP000002494">
    <property type="component" value="Chromosome 2"/>
</dbReference>
<dbReference type="Bgee" id="ENSRNOG00000048363">
    <property type="expression patterns" value="Expressed in heart and 3 other cell types or tissues"/>
</dbReference>
<dbReference type="GO" id="GO:0097728">
    <property type="term" value="C:9+0 motile cilium"/>
    <property type="evidence" value="ECO:0000266"/>
    <property type="project" value="RGD"/>
</dbReference>
<dbReference type="GO" id="GO:0097729">
    <property type="term" value="C:9+2 motile cilium"/>
    <property type="evidence" value="ECO:0000266"/>
    <property type="project" value="RGD"/>
</dbReference>
<dbReference type="GO" id="GO:0005858">
    <property type="term" value="C:axonemal dynein complex"/>
    <property type="evidence" value="ECO:0000266"/>
    <property type="project" value="RGD"/>
</dbReference>
<dbReference type="GO" id="GO:0005930">
    <property type="term" value="C:axoneme"/>
    <property type="evidence" value="ECO:0000250"/>
    <property type="project" value="UniProtKB"/>
</dbReference>
<dbReference type="GO" id="GO:0005737">
    <property type="term" value="C:cytoplasm"/>
    <property type="evidence" value="ECO:0000266"/>
    <property type="project" value="RGD"/>
</dbReference>
<dbReference type="GO" id="GO:0005576">
    <property type="term" value="C:extracellular region"/>
    <property type="evidence" value="ECO:0007669"/>
    <property type="project" value="GOC"/>
</dbReference>
<dbReference type="GO" id="GO:0097386">
    <property type="term" value="C:glial cell projection"/>
    <property type="evidence" value="ECO:0000266"/>
    <property type="project" value="RGD"/>
</dbReference>
<dbReference type="GO" id="GO:0005874">
    <property type="term" value="C:microtubule"/>
    <property type="evidence" value="ECO:0007669"/>
    <property type="project" value="UniProtKB-KW"/>
</dbReference>
<dbReference type="GO" id="GO:0031514">
    <property type="term" value="C:motile cilium"/>
    <property type="evidence" value="ECO:0000250"/>
    <property type="project" value="UniProtKB"/>
</dbReference>
<dbReference type="GO" id="GO:0036157">
    <property type="term" value="C:outer dynein arm"/>
    <property type="evidence" value="ECO:0000266"/>
    <property type="project" value="RGD"/>
</dbReference>
<dbReference type="GO" id="GO:0005524">
    <property type="term" value="F:ATP binding"/>
    <property type="evidence" value="ECO:0007669"/>
    <property type="project" value="UniProtKB-KW"/>
</dbReference>
<dbReference type="GO" id="GO:0016887">
    <property type="term" value="F:ATP hydrolysis activity"/>
    <property type="evidence" value="ECO:0007669"/>
    <property type="project" value="InterPro"/>
</dbReference>
<dbReference type="GO" id="GO:0045505">
    <property type="term" value="F:dynein intermediate chain binding"/>
    <property type="evidence" value="ECO:0000318"/>
    <property type="project" value="GO_Central"/>
</dbReference>
<dbReference type="GO" id="GO:0051959">
    <property type="term" value="F:dynein light intermediate chain binding"/>
    <property type="evidence" value="ECO:0000318"/>
    <property type="project" value="GO_Central"/>
</dbReference>
<dbReference type="GO" id="GO:0003777">
    <property type="term" value="F:microtubule motor activity"/>
    <property type="evidence" value="ECO:0000266"/>
    <property type="project" value="RGD"/>
</dbReference>
<dbReference type="GO" id="GO:0008569">
    <property type="term" value="F:minus-end-directed microtubule motor activity"/>
    <property type="evidence" value="ECO:0000318"/>
    <property type="project" value="GO_Central"/>
</dbReference>
<dbReference type="GO" id="GO:0060271">
    <property type="term" value="P:cilium assembly"/>
    <property type="evidence" value="ECO:0000266"/>
    <property type="project" value="RGD"/>
</dbReference>
<dbReference type="GO" id="GO:0003341">
    <property type="term" value="P:cilium movement"/>
    <property type="evidence" value="ECO:0000266"/>
    <property type="project" value="RGD"/>
</dbReference>
<dbReference type="GO" id="GO:0060294">
    <property type="term" value="P:cilium movement involved in cell motility"/>
    <property type="evidence" value="ECO:0000318"/>
    <property type="project" value="GO_Central"/>
</dbReference>
<dbReference type="GO" id="GO:0007368">
    <property type="term" value="P:determination of left/right symmetry"/>
    <property type="evidence" value="ECO:0000266"/>
    <property type="project" value="RGD"/>
</dbReference>
<dbReference type="GO" id="GO:0003351">
    <property type="term" value="P:epithelial cilium movement involved in extracellular fluid movement"/>
    <property type="evidence" value="ECO:0000266"/>
    <property type="project" value="RGD"/>
</dbReference>
<dbReference type="GO" id="GO:0051649">
    <property type="term" value="P:establishment of localization in cell"/>
    <property type="evidence" value="ECO:0000266"/>
    <property type="project" value="RGD"/>
</dbReference>
<dbReference type="GO" id="GO:0030317">
    <property type="term" value="P:flagellated sperm motility"/>
    <property type="evidence" value="ECO:0000266"/>
    <property type="project" value="RGD"/>
</dbReference>
<dbReference type="GO" id="GO:0007507">
    <property type="term" value="P:heart development"/>
    <property type="evidence" value="ECO:0000266"/>
    <property type="project" value="RGD"/>
</dbReference>
<dbReference type="GO" id="GO:0021670">
    <property type="term" value="P:lateral ventricle development"/>
    <property type="evidence" value="ECO:0000266"/>
    <property type="project" value="RGD"/>
</dbReference>
<dbReference type="GO" id="GO:0036158">
    <property type="term" value="P:outer dynein arm assembly"/>
    <property type="evidence" value="ECO:0000266"/>
    <property type="project" value="RGD"/>
</dbReference>
<dbReference type="FunFam" id="3.40.50.300:FF:001221">
    <property type="entry name" value="Axonemal dynein heavy chain 8"/>
    <property type="match status" value="1"/>
</dbReference>
<dbReference type="FunFam" id="1.10.8.710:FF:000003">
    <property type="entry name" value="Dynein axonemal heavy chain 5"/>
    <property type="match status" value="1"/>
</dbReference>
<dbReference type="FunFam" id="1.20.58.1120:FF:000004">
    <property type="entry name" value="Dynein axonemal heavy chain 5"/>
    <property type="match status" value="1"/>
</dbReference>
<dbReference type="FunFam" id="1.20.920.20:FF:000004">
    <property type="entry name" value="Dynein axonemal heavy chain 5"/>
    <property type="match status" value="1"/>
</dbReference>
<dbReference type="FunFam" id="1.20.920.30:FF:000004">
    <property type="entry name" value="Dynein axonemal heavy chain 5"/>
    <property type="match status" value="1"/>
</dbReference>
<dbReference type="FunFam" id="3.20.180.20:FF:000001">
    <property type="entry name" value="Dynein axonemal heavy chain 5"/>
    <property type="match status" value="1"/>
</dbReference>
<dbReference type="FunFam" id="3.40.50.300:FF:000543">
    <property type="entry name" value="Dynein axonemal heavy chain 5"/>
    <property type="match status" value="1"/>
</dbReference>
<dbReference type="FunFam" id="3.40.50.300:FF:002141">
    <property type="entry name" value="Dynein heavy chain"/>
    <property type="match status" value="1"/>
</dbReference>
<dbReference type="FunFam" id="1.10.472.130:FF:000009">
    <property type="entry name" value="Dynein heavy chain 5, axonemal"/>
    <property type="match status" value="1"/>
</dbReference>
<dbReference type="FunFam" id="3.40.50.300:FF:000044">
    <property type="entry name" value="Dynein heavy chain 5, axonemal"/>
    <property type="match status" value="1"/>
</dbReference>
<dbReference type="FunFam" id="1.10.287.2620:FF:000003">
    <property type="entry name" value="Dynein, axonemal, heavy chain 5"/>
    <property type="match status" value="1"/>
</dbReference>
<dbReference type="FunFam" id="1.20.140.100:FF:000003">
    <property type="entry name" value="Dynein, axonemal, heavy chain 5"/>
    <property type="match status" value="1"/>
</dbReference>
<dbReference type="Gene3D" id="1.10.287.2620">
    <property type="match status" value="1"/>
</dbReference>
<dbReference type="Gene3D" id="1.10.472.130">
    <property type="match status" value="1"/>
</dbReference>
<dbReference type="Gene3D" id="1.10.8.710">
    <property type="match status" value="1"/>
</dbReference>
<dbReference type="Gene3D" id="1.20.58.1120">
    <property type="match status" value="1"/>
</dbReference>
<dbReference type="Gene3D" id="1.20.920.20">
    <property type="match status" value="1"/>
</dbReference>
<dbReference type="Gene3D" id="1.20.920.30">
    <property type="match status" value="1"/>
</dbReference>
<dbReference type="Gene3D" id="1.20.140.100">
    <property type="entry name" value="Dynein heavy chain, N-terminal domain 2"/>
    <property type="match status" value="1"/>
</dbReference>
<dbReference type="Gene3D" id="3.20.180.20">
    <property type="entry name" value="Dynein heavy chain, N-terminal domain 2"/>
    <property type="match status" value="1"/>
</dbReference>
<dbReference type="Gene3D" id="3.40.50.300">
    <property type="entry name" value="P-loop containing nucleotide triphosphate hydrolases"/>
    <property type="match status" value="3"/>
</dbReference>
<dbReference type="InterPro" id="IPR003593">
    <property type="entry name" value="AAA+_ATPase"/>
</dbReference>
<dbReference type="InterPro" id="IPR035699">
    <property type="entry name" value="AAA_6"/>
</dbReference>
<dbReference type="InterPro" id="IPR026983">
    <property type="entry name" value="DHC"/>
</dbReference>
<dbReference type="InterPro" id="IPR041589">
    <property type="entry name" value="DNAH3_AAA_lid_1"/>
</dbReference>
<dbReference type="InterPro" id="IPR056759">
    <property type="entry name" value="DYH2-5-8_CC"/>
</dbReference>
<dbReference type="InterPro" id="IPR042222">
    <property type="entry name" value="Dynein_2_N"/>
</dbReference>
<dbReference type="InterPro" id="IPR043157">
    <property type="entry name" value="Dynein_AAA1S"/>
</dbReference>
<dbReference type="InterPro" id="IPR041466">
    <property type="entry name" value="Dynein_AAA5_ext"/>
</dbReference>
<dbReference type="InterPro" id="IPR024743">
    <property type="entry name" value="Dynein_HC_stalk"/>
</dbReference>
<dbReference type="InterPro" id="IPR024317">
    <property type="entry name" value="Dynein_heavy_chain_D4_dom"/>
</dbReference>
<dbReference type="InterPro" id="IPR013602">
    <property type="entry name" value="Dynein_heavy_linker"/>
</dbReference>
<dbReference type="InterPro" id="IPR013594">
    <property type="entry name" value="Dynein_heavy_tail"/>
</dbReference>
<dbReference type="InterPro" id="IPR042228">
    <property type="entry name" value="Dynein_linker_3"/>
</dbReference>
<dbReference type="InterPro" id="IPR027417">
    <property type="entry name" value="P-loop_NTPase"/>
</dbReference>
<dbReference type="PANTHER" id="PTHR46532:SF13">
    <property type="entry name" value="CYTOPLASMIC DYNEIN 1 HEAVY CHAIN 1"/>
    <property type="match status" value="1"/>
</dbReference>
<dbReference type="PANTHER" id="PTHR46532">
    <property type="entry name" value="MALE FERTILITY FACTOR KL5"/>
    <property type="match status" value="1"/>
</dbReference>
<dbReference type="Pfam" id="PF12774">
    <property type="entry name" value="AAA_6"/>
    <property type="match status" value="1"/>
</dbReference>
<dbReference type="Pfam" id="PF12775">
    <property type="entry name" value="AAA_7"/>
    <property type="match status" value="1"/>
</dbReference>
<dbReference type="Pfam" id="PF12780">
    <property type="entry name" value="AAA_8"/>
    <property type="match status" value="1"/>
</dbReference>
<dbReference type="Pfam" id="PF17857">
    <property type="entry name" value="AAA_lid_1"/>
    <property type="match status" value="1"/>
</dbReference>
<dbReference type="Pfam" id="PF08385">
    <property type="entry name" value="DHC_N1"/>
    <property type="match status" value="1"/>
</dbReference>
<dbReference type="Pfam" id="PF08393">
    <property type="entry name" value="DHC_N2"/>
    <property type="match status" value="1"/>
</dbReference>
<dbReference type="Pfam" id="PF25007">
    <property type="entry name" value="DYH2-5-8_CC"/>
    <property type="match status" value="1"/>
</dbReference>
<dbReference type="Pfam" id="PF17852">
    <property type="entry name" value="Dynein_AAA_lid"/>
    <property type="match status" value="1"/>
</dbReference>
<dbReference type="Pfam" id="PF12777">
    <property type="entry name" value="MT"/>
    <property type="match status" value="1"/>
</dbReference>
<dbReference type="SMART" id="SM00382">
    <property type="entry name" value="AAA"/>
    <property type="match status" value="3"/>
</dbReference>
<dbReference type="SUPFAM" id="SSF52540">
    <property type="entry name" value="P-loop containing nucleoside triphosphate hydrolases"/>
    <property type="match status" value="4"/>
</dbReference>
<evidence type="ECO:0000250" key="1"/>
<evidence type="ECO:0000250" key="2">
    <source>
        <dbReference type="UniProtKB" id="Q8TE73"/>
    </source>
</evidence>
<evidence type="ECO:0000255" key="3"/>
<evidence type="ECO:0000256" key="4">
    <source>
        <dbReference type="SAM" id="MobiDB-lite"/>
    </source>
</evidence>
<evidence type="ECO:0000269" key="5">
    <source>
    </source>
</evidence>
<evidence type="ECO:0000305" key="6"/>
<evidence type="ECO:0000312" key="7">
    <source>
        <dbReference type="RGD" id="1560828"/>
    </source>
</evidence>
<organism>
    <name type="scientific">Rattus norvegicus</name>
    <name type="common">Rat</name>
    <dbReference type="NCBI Taxonomy" id="10116"/>
    <lineage>
        <taxon>Eukaryota</taxon>
        <taxon>Metazoa</taxon>
        <taxon>Chordata</taxon>
        <taxon>Craniata</taxon>
        <taxon>Vertebrata</taxon>
        <taxon>Euteleostomi</taxon>
        <taxon>Mammalia</taxon>
        <taxon>Eutheria</taxon>
        <taxon>Euarchontoglires</taxon>
        <taxon>Glires</taxon>
        <taxon>Rodentia</taxon>
        <taxon>Myomorpha</taxon>
        <taxon>Muroidea</taxon>
        <taxon>Muridae</taxon>
        <taxon>Murinae</taxon>
        <taxon>Rattus</taxon>
    </lineage>
</organism>
<keyword id="KW-0067">ATP-binding</keyword>
<keyword id="KW-0966">Cell projection</keyword>
<keyword id="KW-0969">Cilium</keyword>
<keyword id="KW-0175">Coiled coil</keyword>
<keyword id="KW-0963">Cytoplasm</keyword>
<keyword id="KW-0206">Cytoskeleton</keyword>
<keyword id="KW-0243">Dynein</keyword>
<keyword id="KW-0493">Microtubule</keyword>
<keyword id="KW-0505">Motor protein</keyword>
<keyword id="KW-0547">Nucleotide-binding</keyword>
<keyword id="KW-1185">Reference proteome</keyword>
<keyword id="KW-0677">Repeat</keyword>
<comment type="function">
    <text evidence="2">Force generating protein of respiratory cilia. Produces force towards the minus ends of microtubules. Dynein has ATPase activity; the force-producing power stroke is thought to occur on release of ADP. Required for structural and functional integrity of the cilia of ependymal cells lining the brain ventricles.</text>
</comment>
<comment type="subunit">
    <text evidence="2 5">Interacts with DNAL1 (PubMed:21496787). Consists of at least two heavy chains and a number of intermediate and light chains.</text>
</comment>
<comment type="subcellular location">
    <subcellularLocation>
        <location evidence="2">Cytoplasm</location>
        <location evidence="2">Cytoskeleton</location>
        <location evidence="2">Cilium axoneme</location>
    </subcellularLocation>
</comment>
<comment type="domain">
    <text evidence="2">Dynein heavy chains probably consist of an N-terminal stem (which binds cargo and interacts with other dynein components), and the head or motor domain. The motor contains six tandemly-linked AAA domains in the head, which form a ring. A stalk-like structure (formed by two of the coiled coil domains) protrudes between AAA 4 and AAA 5 and terminates in a microtubule-binding site. A seventh domain may also contribute to this ring; it is not clear whether the N-terminus or the C-terminus forms this extra domain. There are four well-conserved and two non-conserved ATPase sites, one per AAA domain. Probably only one of these (within AAA 1) actually hydrolyzes ATP, the others may serve a regulatory function.</text>
</comment>
<comment type="similarity">
    <text evidence="6">Belongs to the dynein heavy chain family.</text>
</comment>
<comment type="sequence caution" evidence="6">
    <conflict type="erroneous gene model prediction">
        <sequence resource="EMBL" id="AABR07008948"/>
    </conflict>
</comment>
<feature type="chain" id="PRO_0000441779" description="Dynein axonemal heavy chain 5">
    <location>
        <begin position="1"/>
        <end position="3470"/>
    </location>
</feature>
<feature type="region of interest" description="Stem" evidence="1">
    <location>
        <begin position="1"/>
        <end position="1938"/>
    </location>
</feature>
<feature type="region of interest" description="Disordered" evidence="4">
    <location>
        <begin position="899"/>
        <end position="918"/>
    </location>
</feature>
<feature type="region of interest" description="AAA 1" evidence="1">
    <location>
        <begin position="1939"/>
        <end position="2161"/>
    </location>
</feature>
<feature type="region of interest" description="AAA 2" evidence="1">
    <location>
        <begin position="2221"/>
        <end position="2440"/>
    </location>
</feature>
<feature type="region of interest" description="AAA 3" evidence="1">
    <location>
        <begin position="2547"/>
        <end position="2800"/>
    </location>
</feature>
<feature type="region of interest" description="AAA 4" evidence="1">
    <location>
        <begin position="2913"/>
        <end position="3167"/>
    </location>
</feature>
<feature type="coiled-coil region" evidence="3">
    <location>
        <begin position="3207"/>
        <end position="3241"/>
    </location>
</feature>
<feature type="coiled-coil region" evidence="3">
    <location>
        <begin position="3434"/>
        <end position="3468"/>
    </location>
</feature>
<feature type="binding site" evidence="3">
    <location>
        <begin position="1977"/>
        <end position="1984"/>
    </location>
    <ligand>
        <name>ATP</name>
        <dbReference type="ChEBI" id="CHEBI:30616"/>
    </ligand>
</feature>
<feature type="binding site" evidence="3">
    <location>
        <begin position="2259"/>
        <end position="2266"/>
    </location>
    <ligand>
        <name>ATP</name>
        <dbReference type="ChEBI" id="CHEBI:30616"/>
    </ligand>
</feature>
<feature type="non-terminal residue">
    <location>
        <position position="3470"/>
    </location>
</feature>
<proteinExistence type="evidence at protein level"/>
<reference key="1">
    <citation type="journal article" date="2004" name="Nature">
        <title>Genome sequence of the Brown Norway rat yields insights into mammalian evolution.</title>
        <authorList>
            <person name="Gibbs R.A."/>
            <person name="Weinstock G.M."/>
            <person name="Metzker M.L."/>
            <person name="Muzny D.M."/>
            <person name="Sodergren E.J."/>
            <person name="Scherer S."/>
            <person name="Scott G."/>
            <person name="Steffen D."/>
            <person name="Worley K.C."/>
            <person name="Burch P.E."/>
            <person name="Okwuonu G."/>
            <person name="Hines S."/>
            <person name="Lewis L."/>
            <person name="Deramo C."/>
            <person name="Delgado O."/>
            <person name="Dugan-Rocha S."/>
            <person name="Miner G."/>
            <person name="Morgan M."/>
            <person name="Hawes A."/>
            <person name="Gill R."/>
            <person name="Holt R.A."/>
            <person name="Adams M.D."/>
            <person name="Amanatides P.G."/>
            <person name="Baden-Tillson H."/>
            <person name="Barnstead M."/>
            <person name="Chin S."/>
            <person name="Evans C.A."/>
            <person name="Ferriera S."/>
            <person name="Fosler C."/>
            <person name="Glodek A."/>
            <person name="Gu Z."/>
            <person name="Jennings D."/>
            <person name="Kraft C.L."/>
            <person name="Nguyen T."/>
            <person name="Pfannkoch C.M."/>
            <person name="Sitter C."/>
            <person name="Sutton G.G."/>
            <person name="Venter J.C."/>
            <person name="Woodage T."/>
            <person name="Smith D."/>
            <person name="Lee H.-M."/>
            <person name="Gustafson E."/>
            <person name="Cahill P."/>
            <person name="Kana A."/>
            <person name="Doucette-Stamm L."/>
            <person name="Weinstock K."/>
            <person name="Fechtel K."/>
            <person name="Weiss R.B."/>
            <person name="Dunn D.M."/>
            <person name="Green E.D."/>
            <person name="Blakesley R.W."/>
            <person name="Bouffard G.G."/>
            <person name="De Jong P.J."/>
            <person name="Osoegawa K."/>
            <person name="Zhu B."/>
            <person name="Marra M."/>
            <person name="Schein J."/>
            <person name="Bosdet I."/>
            <person name="Fjell C."/>
            <person name="Jones S."/>
            <person name="Krzywinski M."/>
            <person name="Mathewson C."/>
            <person name="Siddiqui A."/>
            <person name="Wye N."/>
            <person name="McPherson J."/>
            <person name="Zhao S."/>
            <person name="Fraser C.M."/>
            <person name="Shetty J."/>
            <person name="Shatsman S."/>
            <person name="Geer K."/>
            <person name="Chen Y."/>
            <person name="Abramzon S."/>
            <person name="Nierman W.C."/>
            <person name="Havlak P.H."/>
            <person name="Chen R."/>
            <person name="Durbin K.J."/>
            <person name="Egan A."/>
            <person name="Ren Y."/>
            <person name="Song X.-Z."/>
            <person name="Li B."/>
            <person name="Liu Y."/>
            <person name="Qin X."/>
            <person name="Cawley S."/>
            <person name="Cooney A.J."/>
            <person name="D'Souza L.M."/>
            <person name="Martin K."/>
            <person name="Wu J.Q."/>
            <person name="Gonzalez-Garay M.L."/>
            <person name="Jackson A.R."/>
            <person name="Kalafus K.J."/>
            <person name="McLeod M.P."/>
            <person name="Milosavljevic A."/>
            <person name="Virk D."/>
            <person name="Volkov A."/>
            <person name="Wheeler D.A."/>
            <person name="Zhang Z."/>
            <person name="Bailey J.A."/>
            <person name="Eichler E.E."/>
            <person name="Tuzun E."/>
            <person name="Birney E."/>
            <person name="Mongin E."/>
            <person name="Ureta-Vidal A."/>
            <person name="Woodwark C."/>
            <person name="Zdobnov E."/>
            <person name="Bork P."/>
            <person name="Suyama M."/>
            <person name="Torrents D."/>
            <person name="Alexandersson M."/>
            <person name="Trask B.J."/>
            <person name="Young J.M."/>
            <person name="Huang H."/>
            <person name="Wang H."/>
            <person name="Xing H."/>
            <person name="Daniels S."/>
            <person name="Gietzen D."/>
            <person name="Schmidt J."/>
            <person name="Stevens K."/>
            <person name="Vitt U."/>
            <person name="Wingrove J."/>
            <person name="Camara F."/>
            <person name="Mar Alba M."/>
            <person name="Abril J.F."/>
            <person name="Guigo R."/>
            <person name="Smit A."/>
            <person name="Dubchak I."/>
            <person name="Rubin E.M."/>
            <person name="Couronne O."/>
            <person name="Poliakov A."/>
            <person name="Huebner N."/>
            <person name="Ganten D."/>
            <person name="Goesele C."/>
            <person name="Hummel O."/>
            <person name="Kreitler T."/>
            <person name="Lee Y.-A."/>
            <person name="Monti J."/>
            <person name="Schulz H."/>
            <person name="Zimdahl H."/>
            <person name="Himmelbauer H."/>
            <person name="Lehrach H."/>
            <person name="Jacob H.J."/>
            <person name="Bromberg S."/>
            <person name="Gullings-Handley J."/>
            <person name="Jensen-Seaman M.I."/>
            <person name="Kwitek A.E."/>
            <person name="Lazar J."/>
            <person name="Pasko D."/>
            <person name="Tonellato P.J."/>
            <person name="Twigger S."/>
            <person name="Ponting C.P."/>
            <person name="Duarte J.M."/>
            <person name="Rice S."/>
            <person name="Goodstadt L."/>
            <person name="Beatson S.A."/>
            <person name="Emes R.D."/>
            <person name="Winter E.E."/>
            <person name="Webber C."/>
            <person name="Brandt P."/>
            <person name="Nyakatura G."/>
            <person name="Adetobi M."/>
            <person name="Chiaromonte F."/>
            <person name="Elnitski L."/>
            <person name="Eswara P."/>
            <person name="Hardison R.C."/>
            <person name="Hou M."/>
            <person name="Kolbe D."/>
            <person name="Makova K."/>
            <person name="Miller W."/>
            <person name="Nekrutenko A."/>
            <person name="Riemer C."/>
            <person name="Schwartz S."/>
            <person name="Taylor J."/>
            <person name="Yang S."/>
            <person name="Zhang Y."/>
            <person name="Lindpaintner K."/>
            <person name="Andrews T.D."/>
            <person name="Caccamo M."/>
            <person name="Clamp M."/>
            <person name="Clarke L."/>
            <person name="Curwen V."/>
            <person name="Durbin R.M."/>
            <person name="Eyras E."/>
            <person name="Searle S.M."/>
            <person name="Cooper G.M."/>
            <person name="Batzoglou S."/>
            <person name="Brudno M."/>
            <person name="Sidow A."/>
            <person name="Stone E.A."/>
            <person name="Payseur B.A."/>
            <person name="Bourque G."/>
            <person name="Lopez-Otin C."/>
            <person name="Puente X.S."/>
            <person name="Chakrabarti K."/>
            <person name="Chatterji S."/>
            <person name="Dewey C."/>
            <person name="Pachter L."/>
            <person name="Bray N."/>
            <person name="Yap V.B."/>
            <person name="Caspi A."/>
            <person name="Tesler G."/>
            <person name="Pevzner P.A."/>
            <person name="Haussler D."/>
            <person name="Roskin K.M."/>
            <person name="Baertsch R."/>
            <person name="Clawson H."/>
            <person name="Furey T.S."/>
            <person name="Hinrichs A.S."/>
            <person name="Karolchik D."/>
            <person name="Kent W.J."/>
            <person name="Rosenbloom K.R."/>
            <person name="Trumbower H."/>
            <person name="Weirauch M."/>
            <person name="Cooper D.N."/>
            <person name="Stenson P.D."/>
            <person name="Ma B."/>
            <person name="Brent M."/>
            <person name="Arumugam M."/>
            <person name="Shteynberg D."/>
            <person name="Copley R.R."/>
            <person name="Taylor M.S."/>
            <person name="Riethman H."/>
            <person name="Mudunuri U."/>
            <person name="Peterson J."/>
            <person name="Guyer M."/>
            <person name="Felsenfeld A."/>
            <person name="Old S."/>
            <person name="Mockrin S."/>
            <person name="Collins F.S."/>
        </authorList>
    </citation>
    <scope>NUCLEOTIDE SEQUENCE [LARGE SCALE GENOMIC DNA]</scope>
    <scope>IDENTIFICATION</scope>
    <source>
        <strain>Brown Norway</strain>
    </source>
</reference>
<reference key="2">
    <citation type="journal article" date="2011" name="Am. J. Hum. Genet.">
        <title>Primary ciliary dyskinesia caused by homozygous mutation in DNAL1, encoding dynein light chain 1.</title>
        <authorList>
            <person name="Mazor M."/>
            <person name="Alkrinawi S."/>
            <person name="Chalifa-Caspi V."/>
            <person name="Manor E."/>
            <person name="Sheffield V.C."/>
            <person name="Aviram M."/>
            <person name="Parvari R."/>
        </authorList>
    </citation>
    <scope>SUBUNIT</scope>
    <scope>INTERACTION WITH DNAL1</scope>
</reference>
<protein>
    <recommendedName>
        <fullName evidence="6">Dynein axonemal heavy chain 5</fullName>
    </recommendedName>
    <alternativeName>
        <fullName>Axonemal beta dynein heavy chain 5</fullName>
    </alternativeName>
    <alternativeName>
        <fullName>Ciliary dynein heavy chain 5</fullName>
    </alternativeName>
</protein>
<accession>M0R8U1</accession>